<protein>
    <recommendedName>
        <fullName evidence="1">Large ribosomal subunit protein uL11</fullName>
    </recommendedName>
    <alternativeName>
        <fullName evidence="2">50S ribosomal protein L11</fullName>
    </alternativeName>
</protein>
<name>RL11_GEOMG</name>
<proteinExistence type="inferred from homology"/>
<evidence type="ECO:0000255" key="1">
    <source>
        <dbReference type="HAMAP-Rule" id="MF_00736"/>
    </source>
</evidence>
<evidence type="ECO:0000305" key="2"/>
<keyword id="KW-0488">Methylation</keyword>
<keyword id="KW-1185">Reference proteome</keyword>
<keyword id="KW-0687">Ribonucleoprotein</keyword>
<keyword id="KW-0689">Ribosomal protein</keyword>
<keyword id="KW-0694">RNA-binding</keyword>
<keyword id="KW-0699">rRNA-binding</keyword>
<reference key="1">
    <citation type="journal article" date="2009" name="BMC Microbiol.">
        <title>The genome sequence of Geobacter metallireducens: features of metabolism, physiology and regulation common and dissimilar to Geobacter sulfurreducens.</title>
        <authorList>
            <person name="Aklujkar M."/>
            <person name="Krushkal J."/>
            <person name="DiBartolo G."/>
            <person name="Lapidus A."/>
            <person name="Land M.L."/>
            <person name="Lovley D.R."/>
        </authorList>
    </citation>
    <scope>NUCLEOTIDE SEQUENCE [LARGE SCALE GENOMIC DNA]</scope>
    <source>
        <strain>ATCC 53774 / DSM 7210 / GS-15</strain>
    </source>
</reference>
<gene>
    <name evidence="1" type="primary">rplK</name>
    <name type="ordered locus">Gmet_0615</name>
</gene>
<organism>
    <name type="scientific">Geobacter metallireducens (strain ATCC 53774 / DSM 7210 / GS-15)</name>
    <dbReference type="NCBI Taxonomy" id="269799"/>
    <lineage>
        <taxon>Bacteria</taxon>
        <taxon>Pseudomonadati</taxon>
        <taxon>Thermodesulfobacteriota</taxon>
        <taxon>Desulfuromonadia</taxon>
        <taxon>Geobacterales</taxon>
        <taxon>Geobacteraceae</taxon>
        <taxon>Geobacter</taxon>
    </lineage>
</organism>
<dbReference type="EMBL" id="CP000148">
    <property type="protein sequence ID" value="ABB30857.1"/>
    <property type="molecule type" value="Genomic_DNA"/>
</dbReference>
<dbReference type="RefSeq" id="WP_004514631.1">
    <property type="nucleotide sequence ID" value="NC_007517.1"/>
</dbReference>
<dbReference type="SMR" id="Q39Y17"/>
<dbReference type="STRING" id="269799.Gmet_0615"/>
<dbReference type="KEGG" id="gme:Gmet_0615"/>
<dbReference type="eggNOG" id="COG0080">
    <property type="taxonomic scope" value="Bacteria"/>
</dbReference>
<dbReference type="HOGENOM" id="CLU_074237_2_1_7"/>
<dbReference type="Proteomes" id="UP000007073">
    <property type="component" value="Chromosome"/>
</dbReference>
<dbReference type="GO" id="GO:0022625">
    <property type="term" value="C:cytosolic large ribosomal subunit"/>
    <property type="evidence" value="ECO:0007669"/>
    <property type="project" value="TreeGrafter"/>
</dbReference>
<dbReference type="GO" id="GO:0070180">
    <property type="term" value="F:large ribosomal subunit rRNA binding"/>
    <property type="evidence" value="ECO:0007669"/>
    <property type="project" value="UniProtKB-UniRule"/>
</dbReference>
<dbReference type="GO" id="GO:0003735">
    <property type="term" value="F:structural constituent of ribosome"/>
    <property type="evidence" value="ECO:0007669"/>
    <property type="project" value="InterPro"/>
</dbReference>
<dbReference type="GO" id="GO:0006412">
    <property type="term" value="P:translation"/>
    <property type="evidence" value="ECO:0007669"/>
    <property type="project" value="UniProtKB-UniRule"/>
</dbReference>
<dbReference type="CDD" id="cd00349">
    <property type="entry name" value="Ribosomal_L11"/>
    <property type="match status" value="1"/>
</dbReference>
<dbReference type="FunFam" id="1.10.10.250:FF:000001">
    <property type="entry name" value="50S ribosomal protein L11"/>
    <property type="match status" value="1"/>
</dbReference>
<dbReference type="FunFam" id="3.30.1550.10:FF:000001">
    <property type="entry name" value="50S ribosomal protein L11"/>
    <property type="match status" value="1"/>
</dbReference>
<dbReference type="Gene3D" id="1.10.10.250">
    <property type="entry name" value="Ribosomal protein L11, C-terminal domain"/>
    <property type="match status" value="1"/>
</dbReference>
<dbReference type="Gene3D" id="3.30.1550.10">
    <property type="entry name" value="Ribosomal protein L11/L12, N-terminal domain"/>
    <property type="match status" value="1"/>
</dbReference>
<dbReference type="HAMAP" id="MF_00736">
    <property type="entry name" value="Ribosomal_uL11"/>
    <property type="match status" value="1"/>
</dbReference>
<dbReference type="InterPro" id="IPR000911">
    <property type="entry name" value="Ribosomal_uL11"/>
</dbReference>
<dbReference type="InterPro" id="IPR006519">
    <property type="entry name" value="Ribosomal_uL11_bac-typ"/>
</dbReference>
<dbReference type="InterPro" id="IPR020783">
    <property type="entry name" value="Ribosomal_uL11_C"/>
</dbReference>
<dbReference type="InterPro" id="IPR036769">
    <property type="entry name" value="Ribosomal_uL11_C_sf"/>
</dbReference>
<dbReference type="InterPro" id="IPR020784">
    <property type="entry name" value="Ribosomal_uL11_N"/>
</dbReference>
<dbReference type="InterPro" id="IPR036796">
    <property type="entry name" value="Ribosomal_uL11_N_sf"/>
</dbReference>
<dbReference type="NCBIfam" id="TIGR01632">
    <property type="entry name" value="L11_bact"/>
    <property type="match status" value="1"/>
</dbReference>
<dbReference type="PANTHER" id="PTHR11661">
    <property type="entry name" value="60S RIBOSOMAL PROTEIN L12"/>
    <property type="match status" value="1"/>
</dbReference>
<dbReference type="PANTHER" id="PTHR11661:SF1">
    <property type="entry name" value="LARGE RIBOSOMAL SUBUNIT PROTEIN UL11M"/>
    <property type="match status" value="1"/>
</dbReference>
<dbReference type="Pfam" id="PF00298">
    <property type="entry name" value="Ribosomal_L11"/>
    <property type="match status" value="1"/>
</dbReference>
<dbReference type="Pfam" id="PF03946">
    <property type="entry name" value="Ribosomal_L11_N"/>
    <property type="match status" value="1"/>
</dbReference>
<dbReference type="SMART" id="SM00649">
    <property type="entry name" value="RL11"/>
    <property type="match status" value="1"/>
</dbReference>
<dbReference type="SUPFAM" id="SSF54747">
    <property type="entry name" value="Ribosomal L11/L12e N-terminal domain"/>
    <property type="match status" value="1"/>
</dbReference>
<dbReference type="SUPFAM" id="SSF46906">
    <property type="entry name" value="Ribosomal protein L11, C-terminal domain"/>
    <property type="match status" value="1"/>
</dbReference>
<feature type="chain" id="PRO_0000258157" description="Large ribosomal subunit protein uL11">
    <location>
        <begin position="1"/>
        <end position="140"/>
    </location>
</feature>
<comment type="function">
    <text evidence="1">Forms part of the ribosomal stalk which helps the ribosome interact with GTP-bound translation factors.</text>
</comment>
<comment type="subunit">
    <text evidence="1">Part of the ribosomal stalk of the 50S ribosomal subunit. Interacts with L10 and the large rRNA to form the base of the stalk. L10 forms an elongated spine to which L12 dimers bind in a sequential fashion forming a multimeric L10(L12)X complex.</text>
</comment>
<comment type="PTM">
    <text evidence="1">One or more lysine residues are methylated.</text>
</comment>
<comment type="similarity">
    <text evidence="1">Belongs to the universal ribosomal protein uL11 family.</text>
</comment>
<sequence length="140" mass="14758">MAKKITGYIKLQIPAGKANPSPPIGPALGQHGVNIMEFCKAFNAKTQGDEGTITPVVITVYADRSFSFITKVPPMSVLIKKAVGIESGSSVPNKNKVGTLTAEQVKEIAVKKMPDMNAASLEAAMRTVEGTARSMGVEIV</sequence>
<accession>Q39Y17</accession>